<organism evidence="7">
    <name type="scientific">Conus purpurascens</name>
    <name type="common">Purple cone</name>
    <dbReference type="NCBI Taxonomy" id="41690"/>
    <lineage>
        <taxon>Eukaryota</taxon>
        <taxon>Metazoa</taxon>
        <taxon>Spiralia</taxon>
        <taxon>Lophotrochozoa</taxon>
        <taxon>Mollusca</taxon>
        <taxon>Gastropoda</taxon>
        <taxon>Caenogastropoda</taxon>
        <taxon>Neogastropoda</taxon>
        <taxon>Conoidea</taxon>
        <taxon>Conidae</taxon>
        <taxon>Conus</taxon>
        <taxon>Chelyconus</taxon>
    </lineage>
</organism>
<evidence type="ECO:0000250" key="1">
    <source>
        <dbReference type="UniProtKB" id="A0A5C2A2T2"/>
    </source>
</evidence>
<evidence type="ECO:0000250" key="2">
    <source>
        <dbReference type="UniProtKB" id="P00608"/>
    </source>
</evidence>
<evidence type="ECO:0000269" key="3">
    <source>
    </source>
</evidence>
<evidence type="ECO:0000303" key="4">
    <source>
    </source>
</evidence>
<evidence type="ECO:0000305" key="5"/>
<evidence type="ECO:0000305" key="6">
    <source>
    </source>
</evidence>
<evidence type="ECO:0000312" key="7">
    <source>
        <dbReference type="EMBL" id="QEO32924.1"/>
    </source>
</evidence>
<protein>
    <recommendedName>
        <fullName evidence="4">Conodipine-P3</fullName>
        <shortName evidence="4">Cdpi-P3</shortName>
        <ecNumber evidence="1">3.1.1.4</ecNumber>
    </recommendedName>
    <alternativeName>
        <fullName evidence="5">Phosphatidylcholine 2-acylhydrolase</fullName>
    </alternativeName>
    <alternativeName>
        <fullName evidence="5">Phospholipase A2</fullName>
        <shortName evidence="5">PLA2</shortName>
    </alternativeName>
    <component>
        <recommendedName>
            <fullName evidence="4">Conodipine-P3 alpha subunit</fullName>
        </recommendedName>
    </component>
    <component>
        <recommendedName>
            <fullName evidence="4">Conodipine-P3 beta subunit</fullName>
        </recommendedName>
    </component>
</protein>
<accession>A0A5C1ZW08</accession>
<feature type="signal peptide" evidence="1">
    <location>
        <begin position="1"/>
        <end position="24"/>
    </location>
</feature>
<feature type="chain" id="PRO_0000449357" description="Conodipine-P3 alpha subunit" evidence="4">
    <location>
        <begin position="25"/>
        <end position="97"/>
    </location>
</feature>
<feature type="propeptide" id="PRO_0000449358" description="Interchain peptide" evidence="4">
    <location>
        <begin position="98"/>
        <end position="130"/>
    </location>
</feature>
<feature type="chain" id="PRO_0000449359" description="Conodipine-P3 beta subunit" evidence="4">
    <location>
        <begin position="131"/>
        <end position="178"/>
    </location>
</feature>
<feature type="active site" evidence="2">
    <location>
        <position position="54"/>
    </location>
</feature>
<feature type="modified residue" description="4-hydroxyproline" evidence="1">
    <location>
        <position position="38"/>
    </location>
</feature>
<feature type="modified residue" description="4-hydroxyproline; partial" evidence="3">
    <location>
        <position position="42"/>
    </location>
</feature>
<feature type="modified residue" description="4-hydroxyproline; partial" evidence="3">
    <location>
        <position position="49"/>
    </location>
</feature>
<feature type="modified residue" description="Pyrrolidone carboxylic acid" evidence="1">
    <location>
        <position position="131"/>
    </location>
</feature>
<feature type="modified residue" description="4-hydroxyproline; partial" evidence="1">
    <location>
        <position position="137"/>
    </location>
</feature>
<reference evidence="7" key="1">
    <citation type="journal article" date="2019" name="Mol. Cell. Proteomics">
        <title>Conodipine-P1-3, the First Phospholipases A2 Characterized from Injected Cone Snail Venom.</title>
        <authorList>
            <person name="Moeller C."/>
            <person name="Davis W.C."/>
            <person name="Clark E."/>
            <person name="DeCaprio A."/>
            <person name="Mari F."/>
        </authorList>
    </citation>
    <scope>NUCLEOTIDE SEQUENCE [MRNA]</scope>
    <scope>PROTEIN SEQUENCE OF 41-73</scope>
    <scope>MASS SPECTROMETRY</scope>
    <scope>SUBUNIT</scope>
    <scope>SUBCELLULAR LOCATION</scope>
    <scope>TISSUE SPECIFICITY</scope>
    <scope>HYDROXYLATION AT PRO-42 AND PRO-49</scope>
</reference>
<name>COP3_CONPU</name>
<proteinExistence type="evidence at protein level"/>
<keyword id="KW-0106">Calcium</keyword>
<keyword id="KW-0903">Direct protein sequencing</keyword>
<keyword id="KW-1015">Disulfide bond</keyword>
<keyword id="KW-0378">Hydrolase</keyword>
<keyword id="KW-0379">Hydroxylation</keyword>
<keyword id="KW-0873">Pyrrolidone carboxylic acid</keyword>
<keyword id="KW-0964">Secreted</keyword>
<keyword id="KW-0732">Signal</keyword>
<keyword id="KW-0800">Toxin</keyword>
<sequence length="178" mass="19835">MKLLAPVLWAMAALGVTWLVAVDSKESCTKHSNGCSTPLRLPCQEYFRPACDIHDNCYHCGKTFGISREECDKAFLKDMNTLCKKLGSNSATCPARGKREVTSHRATSIAHSRLWKTALDQKSFLNRKARQVFFLLPTTCQGWAKNYHLAVKLAGANSYSVTTDLETCQGLEHCLPNH</sequence>
<comment type="function">
    <text evidence="1">Catalyzes the calcium-dependent hydrolysis of the 2-acyl groups in 3-sn-phosphoglycerides.</text>
</comment>
<comment type="catalytic activity">
    <reaction evidence="1">
        <text>a 1,2-diacyl-sn-glycero-3-phosphocholine + H2O = a 1-acyl-sn-glycero-3-phosphocholine + a fatty acid + H(+)</text>
        <dbReference type="Rhea" id="RHEA:15801"/>
        <dbReference type="ChEBI" id="CHEBI:15377"/>
        <dbReference type="ChEBI" id="CHEBI:15378"/>
        <dbReference type="ChEBI" id="CHEBI:28868"/>
        <dbReference type="ChEBI" id="CHEBI:57643"/>
        <dbReference type="ChEBI" id="CHEBI:58168"/>
        <dbReference type="EC" id="3.1.1.4"/>
    </reaction>
</comment>
<comment type="cofactor">
    <cofactor evidence="1">
        <name>Ca(2+)</name>
        <dbReference type="ChEBI" id="CHEBI:29108"/>
    </cofactor>
</comment>
<comment type="subunit">
    <text evidence="3">Heterodimer of an alpha and a beta chain; probably disulfide-linked.</text>
</comment>
<comment type="subcellular location">
    <subcellularLocation>
        <location evidence="3">Secreted</location>
    </subcellularLocation>
</comment>
<comment type="tissue specificity">
    <text evidence="6">Expressed by the venom duct.</text>
</comment>
<comment type="mass spectrometry" mass="13402.0" method="MALDI" evidence="3">
    <text>The measured mass is of a heterodimer of an alpha and a beta chain.</text>
</comment>
<comment type="similarity">
    <text evidence="5">Belongs to the phospholipase A2 family. Group IX subfamily.</text>
</comment>
<dbReference type="EC" id="3.1.1.4" evidence="1"/>
<dbReference type="EMBL" id="MK493029">
    <property type="protein sequence ID" value="QEO32924.1"/>
    <property type="molecule type" value="mRNA"/>
</dbReference>
<dbReference type="SMR" id="A0A5C1ZW08"/>
<dbReference type="GO" id="GO:0005576">
    <property type="term" value="C:extracellular region"/>
    <property type="evidence" value="ECO:0007669"/>
    <property type="project" value="UniProtKB-SubCell"/>
</dbReference>
<dbReference type="GO" id="GO:0004623">
    <property type="term" value="F:phospholipase A2 activity"/>
    <property type="evidence" value="ECO:0007669"/>
    <property type="project" value="UniProtKB-EC"/>
</dbReference>
<dbReference type="GO" id="GO:0090729">
    <property type="term" value="F:toxin activity"/>
    <property type="evidence" value="ECO:0007669"/>
    <property type="project" value="UniProtKB-KW"/>
</dbReference>
<dbReference type="GO" id="GO:0050482">
    <property type="term" value="P:arachidonate secretion"/>
    <property type="evidence" value="ECO:0007669"/>
    <property type="project" value="InterPro"/>
</dbReference>
<dbReference type="GO" id="GO:0006644">
    <property type="term" value="P:phospholipid metabolic process"/>
    <property type="evidence" value="ECO:0007669"/>
    <property type="project" value="InterPro"/>
</dbReference>
<dbReference type="Gene3D" id="1.20.90.10">
    <property type="entry name" value="Phospholipase A2 domain"/>
    <property type="match status" value="1"/>
</dbReference>
<dbReference type="InterPro" id="IPR038875">
    <property type="entry name" value="PLA2_conodipine-like"/>
</dbReference>
<dbReference type="InterPro" id="IPR036444">
    <property type="entry name" value="PLipase_A2_dom_sf"/>
</dbReference>
<dbReference type="PANTHER" id="PTHR37687">
    <property type="entry name" value="AGAP006772-PA"/>
    <property type="match status" value="1"/>
</dbReference>
<dbReference type="PANTHER" id="PTHR37687:SF1">
    <property type="entry name" value="AGAP006772-PA"/>
    <property type="match status" value="1"/>
</dbReference>
<dbReference type="SUPFAM" id="SSF48619">
    <property type="entry name" value="Phospholipase A2, PLA2"/>
    <property type="match status" value="1"/>
</dbReference>